<accession>Q01306</accession>
<accession>Q7RVB9</accession>
<accession>Q86ZI0</accession>
<name>CCG8_NEUCR</name>
<reference key="1">
    <citation type="journal article" date="1996" name="Proc. Natl. Acad. Sci. U.S.A.">
        <title>Circadian clock-controlled genes isolated from Neurospora crassa are late night- to early morning-specific.</title>
        <authorList>
            <person name="Bell-Pedersen D."/>
            <person name="Shinohara M.L."/>
            <person name="Loros J.J."/>
            <person name="Dunlap J.C."/>
        </authorList>
    </citation>
    <scope>NUCLEOTIDE SEQUENCE [GENOMIC DNA]</scope>
    <scope>INDUCTION</scope>
    <source>
        <strain>FRQ7 / 695-425 / FGSC 4898</strain>
    </source>
</reference>
<reference key="2">
    <citation type="journal article" date="2003" name="Nucleic Acids Res.">
        <title>What's in the genome of a filamentous fungus? Analysis of the Neurospora genome sequence.</title>
        <authorList>
            <person name="Mannhaupt G."/>
            <person name="Montrone C."/>
            <person name="Haase D."/>
            <person name="Mewes H.-W."/>
            <person name="Aign V."/>
            <person name="Hoheisel J.D."/>
            <person name="Fartmann B."/>
            <person name="Nyakatura G."/>
            <person name="Kempken F."/>
            <person name="Maier J."/>
            <person name="Schulte U."/>
        </authorList>
    </citation>
    <scope>NUCLEOTIDE SEQUENCE [LARGE SCALE GENOMIC DNA]</scope>
    <source>
        <strain>ATCC 24698 / 74-OR23-1A / CBS 708.71 / DSM 1257 / FGSC 987</strain>
    </source>
</reference>
<reference key="3">
    <citation type="journal article" date="2003" name="Nature">
        <title>The genome sequence of the filamentous fungus Neurospora crassa.</title>
        <authorList>
            <person name="Galagan J.E."/>
            <person name="Calvo S.E."/>
            <person name="Borkovich K.A."/>
            <person name="Selker E.U."/>
            <person name="Read N.D."/>
            <person name="Jaffe D.B."/>
            <person name="FitzHugh W."/>
            <person name="Ma L.-J."/>
            <person name="Smirnov S."/>
            <person name="Purcell S."/>
            <person name="Rehman B."/>
            <person name="Elkins T."/>
            <person name="Engels R."/>
            <person name="Wang S."/>
            <person name="Nielsen C.B."/>
            <person name="Butler J."/>
            <person name="Endrizzi M."/>
            <person name="Qui D."/>
            <person name="Ianakiev P."/>
            <person name="Bell-Pedersen D."/>
            <person name="Nelson M.A."/>
            <person name="Werner-Washburne M."/>
            <person name="Selitrennikoff C.P."/>
            <person name="Kinsey J.A."/>
            <person name="Braun E.L."/>
            <person name="Zelter A."/>
            <person name="Schulte U."/>
            <person name="Kothe G.O."/>
            <person name="Jedd G."/>
            <person name="Mewes H.-W."/>
            <person name="Staben C."/>
            <person name="Marcotte E."/>
            <person name="Greenberg D."/>
            <person name="Roy A."/>
            <person name="Foley K."/>
            <person name="Naylor J."/>
            <person name="Stange-Thomann N."/>
            <person name="Barrett R."/>
            <person name="Gnerre S."/>
            <person name="Kamal M."/>
            <person name="Kamvysselis M."/>
            <person name="Mauceli E.W."/>
            <person name="Bielke C."/>
            <person name="Rudd S."/>
            <person name="Frishman D."/>
            <person name="Krystofova S."/>
            <person name="Rasmussen C."/>
            <person name="Metzenberg R.L."/>
            <person name="Perkins D.D."/>
            <person name="Kroken S."/>
            <person name="Cogoni C."/>
            <person name="Macino G."/>
            <person name="Catcheside D.E.A."/>
            <person name="Li W."/>
            <person name="Pratt R.J."/>
            <person name="Osmani S.A."/>
            <person name="DeSouza C.P.C."/>
            <person name="Glass N.L."/>
            <person name="Orbach M.J."/>
            <person name="Berglund J.A."/>
            <person name="Voelker R."/>
            <person name="Yarden O."/>
            <person name="Plamann M."/>
            <person name="Seiler S."/>
            <person name="Dunlap J.C."/>
            <person name="Radford A."/>
            <person name="Aramayo R."/>
            <person name="Natvig D.O."/>
            <person name="Alex L.A."/>
            <person name="Mannhaupt G."/>
            <person name="Ebbole D.J."/>
            <person name="Freitag M."/>
            <person name="Paulsen I."/>
            <person name="Sachs M.S."/>
            <person name="Lander E.S."/>
            <person name="Nusbaum C."/>
            <person name="Birren B.W."/>
        </authorList>
    </citation>
    <scope>NUCLEOTIDE SEQUENCE [LARGE SCALE GENOMIC DNA]</scope>
    <source>
        <strain>ATCC 24698 / 74-OR23-1A / CBS 708.71 / DSM 1257 / FGSC 987</strain>
    </source>
</reference>
<reference key="4">
    <citation type="submission" date="1998-09" db="EMBL/GenBank/DDBJ databases">
        <authorList>
            <person name="Shinohara M.L."/>
            <person name="Bell-Pedersen D."/>
            <person name="Loros J.J."/>
            <person name="Dunlap J.C."/>
        </authorList>
    </citation>
    <scope>NUCLEOTIDE SEQUENCE [MRNA] OF 503-644</scope>
</reference>
<reference key="5">
    <citation type="journal article" date="2014" name="Antimicrob. Agents Chemother.">
        <title>Transcription factor CCG-8 as a new regulator in the adaptation to antifungal azole stress.</title>
        <authorList>
            <person name="Sun X."/>
            <person name="Wang K."/>
            <person name="Yu X."/>
            <person name="Liu J."/>
            <person name="Zhang H."/>
            <person name="Zhou F."/>
            <person name="Xie B."/>
            <person name="Li S."/>
        </authorList>
    </citation>
    <scope>FUNCTION</scope>
    <scope>DISRUPTION PHENOTYPE</scope>
</reference>
<reference key="6">
    <citation type="journal article" date="2019" name="Curr. Genet.">
        <title>Transcription factor CCG-8 plays a pivotal role in azole adaptive responses of Neurospora crassa by regulating intracellular azole accumulation.</title>
        <authorList>
            <person name="Xue W."/>
            <person name="Yin Y."/>
            <person name="Ismail F."/>
            <person name="Hu C."/>
            <person name="Zhou M."/>
            <person name="Cao X."/>
            <person name="Li S."/>
            <person name="Sun X."/>
        </authorList>
    </citation>
    <scope>FUNCTION</scope>
    <scope>DISRUPTION PHENOTYPE</scope>
</reference>
<organism>
    <name type="scientific">Neurospora crassa (strain ATCC 24698 / 74-OR23-1A / CBS 708.71 / DSM 1257 / FGSC 987)</name>
    <dbReference type="NCBI Taxonomy" id="367110"/>
    <lineage>
        <taxon>Eukaryota</taxon>
        <taxon>Fungi</taxon>
        <taxon>Dikarya</taxon>
        <taxon>Ascomycota</taxon>
        <taxon>Pezizomycotina</taxon>
        <taxon>Sordariomycetes</taxon>
        <taxon>Sordariomycetidae</taxon>
        <taxon>Sordariales</taxon>
        <taxon>Sordariaceae</taxon>
        <taxon>Neurospora</taxon>
    </lineage>
</organism>
<evidence type="ECO:0000256" key="1">
    <source>
        <dbReference type="SAM" id="MobiDB-lite"/>
    </source>
</evidence>
<evidence type="ECO:0000269" key="2">
    <source>
    </source>
</evidence>
<evidence type="ECO:0000269" key="3">
    <source>
    </source>
</evidence>
<evidence type="ECO:0000269" key="4">
    <source>
    </source>
</evidence>
<evidence type="ECO:0000303" key="5">
    <source>
    </source>
</evidence>
<evidence type="ECO:0000303" key="6">
    <source>
    </source>
</evidence>
<evidence type="ECO:0000305" key="7"/>
<gene>
    <name evidence="6" type="primary">ccg-8</name>
    <name type="ORF">64C2.120</name>
    <name type="ORF">NCU09686</name>
</gene>
<keyword id="KW-1185">Reference proteome</keyword>
<dbReference type="EMBL" id="AF088907">
    <property type="protein sequence ID" value="AAC64286.1"/>
    <property type="status" value="ALT_SEQ"/>
    <property type="molecule type" value="Genomic_DNA"/>
</dbReference>
<dbReference type="EMBL" id="BX294009">
    <property type="protein sequence ID" value="CAD70728.1"/>
    <property type="molecule type" value="Genomic_DNA"/>
</dbReference>
<dbReference type="EMBL" id="CM002240">
    <property type="protein sequence ID" value="EAA31382.2"/>
    <property type="molecule type" value="Genomic_DNA"/>
</dbReference>
<dbReference type="EMBL" id="U46087">
    <property type="protein sequence ID" value="AAA98471.1"/>
    <property type="molecule type" value="mRNA"/>
</dbReference>
<dbReference type="PIR" id="T47212">
    <property type="entry name" value="T47212"/>
</dbReference>
<dbReference type="RefSeq" id="XP_960618.2">
    <property type="nucleotide sequence ID" value="XM_955525.3"/>
</dbReference>
<dbReference type="SMR" id="Q01306"/>
<dbReference type="STRING" id="367110.Q01306"/>
<dbReference type="PaxDb" id="5141-EFNCRP00000009386"/>
<dbReference type="EnsemblFungi" id="EAA31382">
    <property type="protein sequence ID" value="EAA31382"/>
    <property type="gene ID" value="NCU09686"/>
</dbReference>
<dbReference type="GeneID" id="3876765"/>
<dbReference type="KEGG" id="ncr:NCU09686"/>
<dbReference type="VEuPathDB" id="FungiDB:NCU09686"/>
<dbReference type="HOGENOM" id="CLU_015714_0_0_1"/>
<dbReference type="InParanoid" id="Q01306"/>
<dbReference type="OrthoDB" id="2441642at2759"/>
<dbReference type="Proteomes" id="UP000001805">
    <property type="component" value="Chromosome 2, Linkage Group V"/>
</dbReference>
<dbReference type="GO" id="GO:0005783">
    <property type="term" value="C:endoplasmic reticulum"/>
    <property type="evidence" value="ECO:0000318"/>
    <property type="project" value="GO_Central"/>
</dbReference>
<dbReference type="GO" id="GO:0005634">
    <property type="term" value="C:nucleus"/>
    <property type="evidence" value="ECO:0000318"/>
    <property type="project" value="GO_Central"/>
</dbReference>
<dbReference type="GO" id="GO:0003714">
    <property type="term" value="F:transcription corepressor activity"/>
    <property type="evidence" value="ECO:0000318"/>
    <property type="project" value="GO_Central"/>
</dbReference>
<dbReference type="GO" id="GO:0030968">
    <property type="term" value="P:endoplasmic reticulum unfolded protein response"/>
    <property type="evidence" value="ECO:0000318"/>
    <property type="project" value="GO_Central"/>
</dbReference>
<dbReference type="GO" id="GO:0008654">
    <property type="term" value="P:phospholipid biosynthetic process"/>
    <property type="evidence" value="ECO:0000318"/>
    <property type="project" value="GO_Central"/>
</dbReference>
<dbReference type="GO" id="GO:0006357">
    <property type="term" value="P:regulation of transcription by RNA polymerase II"/>
    <property type="evidence" value="ECO:0000318"/>
    <property type="project" value="GO_Central"/>
</dbReference>
<dbReference type="InterPro" id="IPR013927">
    <property type="entry name" value="TF_Opi1_Ccg-8"/>
</dbReference>
<dbReference type="PANTHER" id="PTHR38406">
    <property type="entry name" value="TRANSCRIPTIONAL REPRESSOR OPI1"/>
    <property type="match status" value="1"/>
</dbReference>
<dbReference type="PANTHER" id="PTHR38406:SF1">
    <property type="entry name" value="TRANSCRIPTIONAL REPRESSOR OPI1"/>
    <property type="match status" value="1"/>
</dbReference>
<dbReference type="Pfam" id="PF08618">
    <property type="entry name" value="Opi1"/>
    <property type="match status" value="1"/>
</dbReference>
<sequence length="661" mass="73265">MEHHHHHRHMHSPSSQQHEHQQHQQYQQPPQHHQHYEAPQHQQQHQHHHHQQQQQQHPVPVPKQEQADNTSAPVLSALPAYPTLPPIWDSTHSPALSASSSSTMQASASSLSSLPPLVLHPPSNGLQPNKPRSRSPSSNRFQTREPAPLSLFDGSPTTELPPIQLDRKRSSSDHSLPSIASLNVGSSLPTLQPTPTPQPPPKFVWPNSNPLSAYYAESDNDGRGASPQHRHDRRSTSVSLDDPQVMMAISALNELKTDSVSSPPNRNAPLRRGMTDQNQEPEPLLSLITTAHPIIESTVQRSSHLYTKTKNFSPRIRSGLEYVEGSLIPVADTVNNVGRRTGIESGVRWILGKRTKSSSDTRESGQNKRHMTSRPVNGTGGEARFSEAPTADASRRTSVSTIETLPAYDDQRSPAYSETVEQNGQAVDPKSALHAQLGNGRVQVTTSSLKETMKEESLRSLKYVLETLRDVTNTLQQGTNELSSVLDQYDRSTTTRDGEDHVMTNGSAPEEDRTRLVERMTELRKSIYSNIKDVSSVVANYTGAALPENAGNLVRHHLLSLPMVWSQASKTTTSSEQPNTQDPNALVRKAAKVALSFSKEGLHIFSQIMEIIRTATDHAEDWRNKKMNQMTPANGTEQEIRPLIDQPLPQVATINGDIPMR</sequence>
<proteinExistence type="evidence at transcript level"/>
<protein>
    <recommendedName>
        <fullName evidence="5">Transcription factor ccg-8</fullName>
    </recommendedName>
    <alternativeName>
        <fullName evidence="6">Clock-controlled protein 8</fullName>
    </alternativeName>
</protein>
<feature type="chain" id="PRO_0000089414" description="Transcription factor ccg-8">
    <location>
        <begin position="1"/>
        <end position="661"/>
    </location>
</feature>
<feature type="region of interest" description="Disordered" evidence="1">
    <location>
        <begin position="1"/>
        <end position="69"/>
    </location>
</feature>
<feature type="region of interest" description="Disordered" evidence="1">
    <location>
        <begin position="107"/>
        <end position="243"/>
    </location>
</feature>
<feature type="region of interest" description="Disordered" evidence="1">
    <location>
        <begin position="255"/>
        <end position="279"/>
    </location>
</feature>
<feature type="region of interest" description="Disordered" evidence="1">
    <location>
        <begin position="354"/>
        <end position="398"/>
    </location>
</feature>
<feature type="compositionally biased region" description="Basic residues" evidence="1">
    <location>
        <begin position="1"/>
        <end position="11"/>
    </location>
</feature>
<feature type="compositionally biased region" description="Low complexity" evidence="1">
    <location>
        <begin position="23"/>
        <end position="43"/>
    </location>
</feature>
<feature type="compositionally biased region" description="Low complexity" evidence="1">
    <location>
        <begin position="107"/>
        <end position="140"/>
    </location>
</feature>
<feature type="compositionally biased region" description="Polar residues" evidence="1">
    <location>
        <begin position="173"/>
        <end position="187"/>
    </location>
</feature>
<feature type="compositionally biased region" description="Pro residues" evidence="1">
    <location>
        <begin position="192"/>
        <end position="203"/>
    </location>
</feature>
<feature type="compositionally biased region" description="Basic and acidic residues" evidence="1">
    <location>
        <begin position="357"/>
        <end position="366"/>
    </location>
</feature>
<feature type="sequence conflict" description="In Ref. 1; AAC64286 and 4; AAA98471." evidence="7" ref="1 4">
    <original>T</original>
    <variation>P</variation>
    <location>
        <position position="614"/>
    </location>
</feature>
<comment type="function">
    <text evidence="2 3">Transcription factor that plays a pivotal role in azole adaptive responses by regulating the drug accumulation in the cells (PubMed:24342650, PubMed:30603874). Affects the transcriptional responses to ketoconazole of many genes, including the target gene (erg11), an azole transporter gene (cdr4), a hexose transporter gene (hxt13), a stress response gene (kts-1), two transcription factor genes (named kts-2 and fsd-1/ndt80) (PubMed:24342650). Also regulates phospholipid synthesis that is not involved in azole resistance (PubMed:24342650).</text>
</comment>
<comment type="induction">
    <text evidence="4">Expression levels may be influenced by circadian rhythms.</text>
</comment>
<comment type="disruption phenotype">
    <text evidence="2 3">Leads to hypersensitivity to azoles (PubMed:24342650). Accumulates toxic sterol 14-alpha-methyl-3,6-diol and ketoconazole in the cells (PubMed:30603874).</text>
</comment>
<comment type="sequence caution" evidence="7">
    <conflict type="erroneous gene model prediction">
        <sequence resource="EMBL-CDS" id="AAC64286"/>
    </conflict>
</comment>